<evidence type="ECO:0000255" key="1">
    <source>
        <dbReference type="HAMAP-Rule" id="MF_00787"/>
    </source>
</evidence>
<feature type="chain" id="PRO_0000141656" description="Cobalt-precorrin-5B C(1)-methyltransferase">
    <location>
        <begin position="1"/>
        <end position="370"/>
    </location>
</feature>
<reference key="1">
    <citation type="journal article" date="2001" name="DNA Res.">
        <title>Complete genomic sequence of the filamentous nitrogen-fixing cyanobacterium Anabaena sp. strain PCC 7120.</title>
        <authorList>
            <person name="Kaneko T."/>
            <person name="Nakamura Y."/>
            <person name="Wolk C.P."/>
            <person name="Kuritz T."/>
            <person name="Sasamoto S."/>
            <person name="Watanabe A."/>
            <person name="Iriguchi M."/>
            <person name="Ishikawa A."/>
            <person name="Kawashima K."/>
            <person name="Kimura T."/>
            <person name="Kishida Y."/>
            <person name="Kohara M."/>
            <person name="Matsumoto M."/>
            <person name="Matsuno A."/>
            <person name="Muraki A."/>
            <person name="Nakazaki N."/>
            <person name="Shimpo S."/>
            <person name="Sugimoto M."/>
            <person name="Takazawa M."/>
            <person name="Yamada M."/>
            <person name="Yasuda M."/>
            <person name="Tabata S."/>
        </authorList>
    </citation>
    <scope>NUCLEOTIDE SEQUENCE [LARGE SCALE GENOMIC DNA]</scope>
    <source>
        <strain>PCC 7120 / SAG 25.82 / UTEX 2576</strain>
    </source>
</reference>
<name>CBID_NOSS1</name>
<comment type="function">
    <text evidence="1">Catalyzes the methylation of C-1 in cobalt-precorrin-5B to form cobalt-precorrin-6A.</text>
</comment>
<comment type="catalytic activity">
    <reaction evidence="1">
        <text>Co-precorrin-5B + S-adenosyl-L-methionine = Co-precorrin-6A + S-adenosyl-L-homocysteine</text>
        <dbReference type="Rhea" id="RHEA:26285"/>
        <dbReference type="ChEBI" id="CHEBI:57856"/>
        <dbReference type="ChEBI" id="CHEBI:59789"/>
        <dbReference type="ChEBI" id="CHEBI:60063"/>
        <dbReference type="ChEBI" id="CHEBI:60064"/>
        <dbReference type="EC" id="2.1.1.195"/>
    </reaction>
</comment>
<comment type="pathway">
    <text evidence="1">Cofactor biosynthesis; adenosylcobalamin biosynthesis; cob(II)yrinate a,c-diamide from sirohydrochlorin (anaerobic route): step 6/10.</text>
</comment>
<comment type="similarity">
    <text evidence="1">Belongs to the CbiD family.</text>
</comment>
<gene>
    <name evidence="1" type="primary">cbiD</name>
    <name type="ordered locus">all2847</name>
</gene>
<dbReference type="EC" id="2.1.1.195" evidence="1"/>
<dbReference type="EMBL" id="BA000019">
    <property type="protein sequence ID" value="BAB74546.1"/>
    <property type="molecule type" value="Genomic_DNA"/>
</dbReference>
<dbReference type="PIR" id="AH2161">
    <property type="entry name" value="AH2161"/>
</dbReference>
<dbReference type="RefSeq" id="WP_010996998.1">
    <property type="nucleotide sequence ID" value="NZ_RSCN01000003.1"/>
</dbReference>
<dbReference type="SMR" id="Q8YT79"/>
<dbReference type="STRING" id="103690.gene:10494881"/>
<dbReference type="KEGG" id="ana:all2847"/>
<dbReference type="eggNOG" id="COG1903">
    <property type="taxonomic scope" value="Bacteria"/>
</dbReference>
<dbReference type="OrthoDB" id="6439987at2"/>
<dbReference type="UniPathway" id="UPA00148">
    <property type="reaction ID" value="UER00227"/>
</dbReference>
<dbReference type="Proteomes" id="UP000002483">
    <property type="component" value="Chromosome"/>
</dbReference>
<dbReference type="GO" id="GO:0043780">
    <property type="term" value="F:cobalt-precorrin-5B C1-methyltransferase activity"/>
    <property type="evidence" value="ECO:0007669"/>
    <property type="project" value="RHEA"/>
</dbReference>
<dbReference type="GO" id="GO:0019251">
    <property type="term" value="P:anaerobic cobalamin biosynthetic process"/>
    <property type="evidence" value="ECO:0007669"/>
    <property type="project" value="UniProtKB-UniRule"/>
</dbReference>
<dbReference type="GO" id="GO:0032259">
    <property type="term" value="P:methylation"/>
    <property type="evidence" value="ECO:0007669"/>
    <property type="project" value="UniProtKB-KW"/>
</dbReference>
<dbReference type="Gene3D" id="3.30.2110.10">
    <property type="entry name" value="CbiD-like"/>
    <property type="match status" value="1"/>
</dbReference>
<dbReference type="HAMAP" id="MF_00787">
    <property type="entry name" value="CbiD"/>
    <property type="match status" value="1"/>
</dbReference>
<dbReference type="InterPro" id="IPR002748">
    <property type="entry name" value="CbiD"/>
</dbReference>
<dbReference type="InterPro" id="IPR036074">
    <property type="entry name" value="CbiD_sf"/>
</dbReference>
<dbReference type="NCBIfam" id="TIGR00312">
    <property type="entry name" value="cbiD"/>
    <property type="match status" value="1"/>
</dbReference>
<dbReference type="PANTHER" id="PTHR35863">
    <property type="entry name" value="COBALT-PRECORRIN-5B C(1)-METHYLTRANSFERASE"/>
    <property type="match status" value="1"/>
</dbReference>
<dbReference type="PANTHER" id="PTHR35863:SF1">
    <property type="entry name" value="COBALT-PRECORRIN-5B C(1)-METHYLTRANSFERASE"/>
    <property type="match status" value="1"/>
</dbReference>
<dbReference type="Pfam" id="PF01888">
    <property type="entry name" value="CbiD"/>
    <property type="match status" value="1"/>
</dbReference>
<dbReference type="PIRSF" id="PIRSF026782">
    <property type="entry name" value="CbiD"/>
    <property type="match status" value="1"/>
</dbReference>
<dbReference type="SUPFAM" id="SSF111342">
    <property type="entry name" value="CbiD-like"/>
    <property type="match status" value="1"/>
</dbReference>
<keyword id="KW-0169">Cobalamin biosynthesis</keyword>
<keyword id="KW-0489">Methyltransferase</keyword>
<keyword id="KW-1185">Reference proteome</keyword>
<keyword id="KW-0949">S-adenosyl-L-methionine</keyword>
<keyword id="KW-0808">Transferase</keyword>
<accession>Q8YT79</accession>
<sequence>MRSGYTLPVFACAGAIAALHWLRQRQSIQVALVDLIEPAQIAEVPIEQVAGLSANMALAITRSDPGDNLDLTKNTPIWAVVEWGKTGGEQVTIKGGEGIGKQVNADNQAAIYSYAQRLLQANLTRLLAPEESIIVTIILPEGRSLAVRTSNSAFGVVEGLSLLGTTGISQPLSSPDQLDAFRSELQHKASLYESLVFCIGENGLDLARKIGINAEKLVKTANWLGPMLVEADALGVKEILLFGYHGKLMKLAGGIFHTHHHLADGRREVLATHCALAGLSKQDIEIVFHSPTAEAALKHLKALDISTGNDWVNQVYSAIAETIDSRCQEYMQSHSSRGTAATICGSILFDRDRKIIVKSKTACNLMGNLC</sequence>
<proteinExistence type="inferred from homology"/>
<organism>
    <name type="scientific">Nostoc sp. (strain PCC 7120 / SAG 25.82 / UTEX 2576)</name>
    <dbReference type="NCBI Taxonomy" id="103690"/>
    <lineage>
        <taxon>Bacteria</taxon>
        <taxon>Bacillati</taxon>
        <taxon>Cyanobacteriota</taxon>
        <taxon>Cyanophyceae</taxon>
        <taxon>Nostocales</taxon>
        <taxon>Nostocaceae</taxon>
        <taxon>Nostoc</taxon>
    </lineage>
</organism>
<protein>
    <recommendedName>
        <fullName evidence="1">Cobalt-precorrin-5B C(1)-methyltransferase</fullName>
        <ecNumber evidence="1">2.1.1.195</ecNumber>
    </recommendedName>
    <alternativeName>
        <fullName evidence="1">Cobalt-precorrin-6A synthase</fullName>
    </alternativeName>
</protein>